<dbReference type="EMBL" id="Y07521">
    <property type="protein sequence ID" value="CAA68814.1"/>
    <property type="molecule type" value="mRNA"/>
</dbReference>
<dbReference type="EMBL" id="AC020786">
    <property type="status" value="NOT_ANNOTATED_CDS"/>
    <property type="molecule type" value="Genomic_DNA"/>
</dbReference>
<dbReference type="EMBL" id="AC090652">
    <property type="status" value="NOT_ANNOTATED_CDS"/>
    <property type="molecule type" value="Genomic_DNA"/>
</dbReference>
<dbReference type="CCDS" id="CCDS21278.1">
    <molecule id="P15388-1"/>
</dbReference>
<dbReference type="CCDS" id="CCDS52252.1">
    <molecule id="P15388-3"/>
</dbReference>
<dbReference type="PIR" id="S07095">
    <property type="entry name" value="S07095"/>
</dbReference>
<dbReference type="RefSeq" id="NP_001106210.1">
    <molecule id="P15388-3"/>
    <property type="nucleotide sequence ID" value="NM_001112739.2"/>
</dbReference>
<dbReference type="RefSeq" id="NP_032447.1">
    <molecule id="P15388-1"/>
    <property type="nucleotide sequence ID" value="NM_008421.3"/>
</dbReference>
<dbReference type="SMR" id="P15388"/>
<dbReference type="BioGRID" id="200887">
    <property type="interactions" value="3"/>
</dbReference>
<dbReference type="FunCoup" id="P15388">
    <property type="interactions" value="244"/>
</dbReference>
<dbReference type="STRING" id="10090.ENSMUSP00000124938"/>
<dbReference type="ChEMBL" id="CHEMBL4105978"/>
<dbReference type="DrugCentral" id="P15388"/>
<dbReference type="GuidetoPHARMACOLOGY" id="548"/>
<dbReference type="GlyCosmos" id="P15388">
    <property type="glycosylation" value="2 sites, No reported glycans"/>
</dbReference>
<dbReference type="GlyGen" id="P15388">
    <property type="glycosylation" value="3 sites, 1 N-linked glycan (1 site), 1 O-linked glycan (1 site)"/>
</dbReference>
<dbReference type="iPTMnet" id="P15388"/>
<dbReference type="PhosphoSitePlus" id="P15388"/>
<dbReference type="SwissPalm" id="P15388"/>
<dbReference type="PaxDb" id="10090-ENSMUSP00000124938"/>
<dbReference type="PeptideAtlas" id="P15388"/>
<dbReference type="ProteomicsDB" id="269257">
    <molecule id="P15388-1"/>
</dbReference>
<dbReference type="ProteomicsDB" id="269258">
    <molecule id="P15388-3"/>
</dbReference>
<dbReference type="ABCD" id="P15388">
    <property type="antibodies" value="1 sequenced antibody"/>
</dbReference>
<dbReference type="Antibodypedia" id="24953">
    <property type="antibodies" value="394 antibodies from 32 providers"/>
</dbReference>
<dbReference type="DNASU" id="16502"/>
<dbReference type="Ensembl" id="ENSMUST00000025202.8">
    <molecule id="P15388-1"/>
    <property type="protein sequence ID" value="ENSMUSP00000025202.7"/>
    <property type="gene ID" value="ENSMUSG00000058975.8"/>
</dbReference>
<dbReference type="Ensembl" id="ENSMUST00000160433.3">
    <molecule id="P15388-3"/>
    <property type="protein sequence ID" value="ENSMUSP00000124938.2"/>
    <property type="gene ID" value="ENSMUSG00000058975.8"/>
</dbReference>
<dbReference type="GeneID" id="16502"/>
<dbReference type="KEGG" id="mmu:16502"/>
<dbReference type="UCSC" id="uc009gyo.2">
    <molecule id="P15388-1"/>
    <property type="organism name" value="mouse"/>
</dbReference>
<dbReference type="AGR" id="MGI:96667"/>
<dbReference type="CTD" id="3746"/>
<dbReference type="MGI" id="MGI:96667">
    <property type="gene designation" value="Kcnc1"/>
</dbReference>
<dbReference type="VEuPathDB" id="HostDB:ENSMUSG00000058975"/>
<dbReference type="eggNOG" id="KOG3713">
    <property type="taxonomic scope" value="Eukaryota"/>
</dbReference>
<dbReference type="GeneTree" id="ENSGT00940000156912"/>
<dbReference type="HOGENOM" id="CLU_011722_4_3_1"/>
<dbReference type="InParanoid" id="P15388"/>
<dbReference type="OMA" id="QTQSWAL"/>
<dbReference type="PhylomeDB" id="P15388"/>
<dbReference type="TreeFam" id="TF352511"/>
<dbReference type="Reactome" id="R-MMU-1296072">
    <property type="pathway name" value="Voltage gated Potassium channels"/>
</dbReference>
<dbReference type="BioGRID-ORCS" id="16502">
    <property type="hits" value="0 hits in 79 CRISPR screens"/>
</dbReference>
<dbReference type="ChiTaRS" id="Kcnc1">
    <property type="organism name" value="mouse"/>
</dbReference>
<dbReference type="PRO" id="PR:P15388"/>
<dbReference type="Proteomes" id="UP000000589">
    <property type="component" value="Chromosome 7"/>
</dbReference>
<dbReference type="RNAct" id="P15388">
    <property type="molecule type" value="protein"/>
</dbReference>
<dbReference type="Bgee" id="ENSMUSG00000058975">
    <property type="expression patterns" value="Expressed in cerebellar cortex and 104 other cell types or tissues"/>
</dbReference>
<dbReference type="ExpressionAtlas" id="P15388">
    <property type="expression patterns" value="baseline and differential"/>
</dbReference>
<dbReference type="GO" id="GO:0030673">
    <property type="term" value="C:axolemma"/>
    <property type="evidence" value="ECO:0000314"/>
    <property type="project" value="MGI"/>
</dbReference>
<dbReference type="GO" id="GO:0044305">
    <property type="term" value="C:calyx of Held"/>
    <property type="evidence" value="ECO:0007669"/>
    <property type="project" value="Ensembl"/>
</dbReference>
<dbReference type="GO" id="GO:0009986">
    <property type="term" value="C:cell surface"/>
    <property type="evidence" value="ECO:0007669"/>
    <property type="project" value="Ensembl"/>
</dbReference>
<dbReference type="GO" id="GO:0032590">
    <property type="term" value="C:dendrite membrane"/>
    <property type="evidence" value="ECO:0000314"/>
    <property type="project" value="MGI"/>
</dbReference>
<dbReference type="GO" id="GO:0032809">
    <property type="term" value="C:neuronal cell body membrane"/>
    <property type="evidence" value="ECO:0000314"/>
    <property type="project" value="MGI"/>
</dbReference>
<dbReference type="GO" id="GO:0045211">
    <property type="term" value="C:postsynaptic membrane"/>
    <property type="evidence" value="ECO:0007669"/>
    <property type="project" value="Ensembl"/>
</dbReference>
<dbReference type="GO" id="GO:0042734">
    <property type="term" value="C:presynaptic membrane"/>
    <property type="evidence" value="ECO:0007669"/>
    <property type="project" value="UniProtKB-SubCell"/>
</dbReference>
<dbReference type="GO" id="GO:0008076">
    <property type="term" value="C:voltage-gated potassium channel complex"/>
    <property type="evidence" value="ECO:0000250"/>
    <property type="project" value="UniProtKB"/>
</dbReference>
<dbReference type="GO" id="GO:0005251">
    <property type="term" value="F:delayed rectifier potassium channel activity"/>
    <property type="evidence" value="ECO:0000250"/>
    <property type="project" value="UniProtKB"/>
</dbReference>
<dbReference type="GO" id="GO:0019894">
    <property type="term" value="F:kinesin binding"/>
    <property type="evidence" value="ECO:0000314"/>
    <property type="project" value="MGI"/>
</dbReference>
<dbReference type="GO" id="GO:0046872">
    <property type="term" value="F:metal ion binding"/>
    <property type="evidence" value="ECO:0007669"/>
    <property type="project" value="UniProtKB-KW"/>
</dbReference>
<dbReference type="GO" id="GO:0044325">
    <property type="term" value="F:transmembrane transporter binding"/>
    <property type="evidence" value="ECO:0000353"/>
    <property type="project" value="UniProtKB"/>
</dbReference>
<dbReference type="GO" id="GO:0099508">
    <property type="term" value="F:voltage-gated monoatomic ion channel activity involved in regulation of presynaptic membrane potential"/>
    <property type="evidence" value="ECO:0007669"/>
    <property type="project" value="Ensembl"/>
</dbReference>
<dbReference type="GO" id="GO:0005249">
    <property type="term" value="F:voltage-gated potassium channel activity"/>
    <property type="evidence" value="ECO:0000250"/>
    <property type="project" value="UniProtKB"/>
</dbReference>
<dbReference type="GO" id="GO:0071466">
    <property type="term" value="P:cellular response to xenobiotic stimulus"/>
    <property type="evidence" value="ECO:0007669"/>
    <property type="project" value="Ensembl"/>
</dbReference>
<dbReference type="GO" id="GO:0021549">
    <property type="term" value="P:cerebellum development"/>
    <property type="evidence" value="ECO:0007669"/>
    <property type="project" value="Ensembl"/>
</dbReference>
<dbReference type="GO" id="GO:0022038">
    <property type="term" value="P:corpus callosum development"/>
    <property type="evidence" value="ECO:0007669"/>
    <property type="project" value="Ensembl"/>
</dbReference>
<dbReference type="GO" id="GO:0021759">
    <property type="term" value="P:globus pallidus development"/>
    <property type="evidence" value="ECO:0007669"/>
    <property type="project" value="Ensembl"/>
</dbReference>
<dbReference type="GO" id="GO:0021554">
    <property type="term" value="P:optic nerve development"/>
    <property type="evidence" value="ECO:0007669"/>
    <property type="project" value="Ensembl"/>
</dbReference>
<dbReference type="GO" id="GO:1901381">
    <property type="term" value="P:positive regulation of potassium ion transmembrane transport"/>
    <property type="evidence" value="ECO:0007669"/>
    <property type="project" value="Ensembl"/>
</dbReference>
<dbReference type="GO" id="GO:0071805">
    <property type="term" value="P:potassium ion transmembrane transport"/>
    <property type="evidence" value="ECO:0000250"/>
    <property type="project" value="UniProtKB"/>
</dbReference>
<dbReference type="GO" id="GO:0051260">
    <property type="term" value="P:protein homooligomerization"/>
    <property type="evidence" value="ECO:0007669"/>
    <property type="project" value="InterPro"/>
</dbReference>
<dbReference type="GO" id="GO:0051262">
    <property type="term" value="P:protein tetramerization"/>
    <property type="evidence" value="ECO:0000250"/>
    <property type="project" value="UniProtKB"/>
</dbReference>
<dbReference type="GO" id="GO:0014075">
    <property type="term" value="P:response to amine"/>
    <property type="evidence" value="ECO:0007669"/>
    <property type="project" value="Ensembl"/>
</dbReference>
<dbReference type="GO" id="GO:0010996">
    <property type="term" value="P:response to auditory stimulus"/>
    <property type="evidence" value="ECO:0007669"/>
    <property type="project" value="Ensembl"/>
</dbReference>
<dbReference type="GO" id="GO:0071774">
    <property type="term" value="P:response to fibroblast growth factor"/>
    <property type="evidence" value="ECO:0007669"/>
    <property type="project" value="Ensembl"/>
</dbReference>
<dbReference type="GO" id="GO:0009642">
    <property type="term" value="P:response to light intensity"/>
    <property type="evidence" value="ECO:0007669"/>
    <property type="project" value="Ensembl"/>
</dbReference>
<dbReference type="GO" id="GO:1990089">
    <property type="term" value="P:response to nerve growth factor"/>
    <property type="evidence" value="ECO:0007669"/>
    <property type="project" value="Ensembl"/>
</dbReference>
<dbReference type="GO" id="GO:0035864">
    <property type="term" value="P:response to potassium ion"/>
    <property type="evidence" value="ECO:0007669"/>
    <property type="project" value="Ensembl"/>
</dbReference>
<dbReference type="GO" id="GO:0009636">
    <property type="term" value="P:response to toxic substance"/>
    <property type="evidence" value="ECO:0007669"/>
    <property type="project" value="Ensembl"/>
</dbReference>
<dbReference type="CDD" id="cd18414">
    <property type="entry name" value="BTB_KCNC1_3"/>
    <property type="match status" value="1"/>
</dbReference>
<dbReference type="FunFam" id="1.10.287.70:FF:000011">
    <property type="entry name" value="Potassium channel, voltage-gated Shaw-related subfamily C, member 4"/>
    <property type="match status" value="1"/>
</dbReference>
<dbReference type="FunFam" id="1.20.120.350:FF:000014">
    <property type="entry name" value="Potassium channel, voltage-gated Shaw-related subfamily C, member 4"/>
    <property type="match status" value="1"/>
</dbReference>
<dbReference type="FunFam" id="3.30.710.10:FF:000002">
    <property type="entry name" value="Potassium voltage-gated channel subfamily C member 2"/>
    <property type="match status" value="1"/>
</dbReference>
<dbReference type="Gene3D" id="1.10.287.70">
    <property type="match status" value="1"/>
</dbReference>
<dbReference type="Gene3D" id="3.30.710.10">
    <property type="entry name" value="Potassium Channel Kv1.1, Chain A"/>
    <property type="match status" value="1"/>
</dbReference>
<dbReference type="Gene3D" id="1.20.120.350">
    <property type="entry name" value="Voltage-gated potassium channels. Chain C"/>
    <property type="match status" value="1"/>
</dbReference>
<dbReference type="InterPro" id="IPR000210">
    <property type="entry name" value="BTB/POZ_dom"/>
</dbReference>
<dbReference type="InterPro" id="IPR005821">
    <property type="entry name" value="Ion_trans_dom"/>
</dbReference>
<dbReference type="InterPro" id="IPR003968">
    <property type="entry name" value="K_chnl_volt-dep_Kv"/>
</dbReference>
<dbReference type="InterPro" id="IPR003974">
    <property type="entry name" value="K_chnl_volt-dep_Kv3"/>
</dbReference>
<dbReference type="InterPro" id="IPR005403">
    <property type="entry name" value="K_chnl_volt-dep_Kv3.1"/>
</dbReference>
<dbReference type="InterPro" id="IPR011333">
    <property type="entry name" value="SKP1/BTB/POZ_sf"/>
</dbReference>
<dbReference type="InterPro" id="IPR003131">
    <property type="entry name" value="T1-type_BTB"/>
</dbReference>
<dbReference type="InterPro" id="IPR028325">
    <property type="entry name" value="VG_K_chnl"/>
</dbReference>
<dbReference type="InterPro" id="IPR027359">
    <property type="entry name" value="Volt_channel_dom_sf"/>
</dbReference>
<dbReference type="PANTHER" id="PTHR11537:SF87">
    <property type="entry name" value="POTASSIUM VOLTAGE-GATED CHANNEL SUBFAMILY C MEMBER 1"/>
    <property type="match status" value="1"/>
</dbReference>
<dbReference type="PANTHER" id="PTHR11537">
    <property type="entry name" value="VOLTAGE-GATED POTASSIUM CHANNEL"/>
    <property type="match status" value="1"/>
</dbReference>
<dbReference type="Pfam" id="PF02214">
    <property type="entry name" value="BTB_2"/>
    <property type="match status" value="1"/>
</dbReference>
<dbReference type="Pfam" id="PF00520">
    <property type="entry name" value="Ion_trans"/>
    <property type="match status" value="1"/>
</dbReference>
<dbReference type="PRINTS" id="PR00169">
    <property type="entry name" value="KCHANNEL"/>
</dbReference>
<dbReference type="PRINTS" id="PR01581">
    <property type="entry name" value="KV31CHANNEL"/>
</dbReference>
<dbReference type="PRINTS" id="PR01491">
    <property type="entry name" value="KVCHANNEL"/>
</dbReference>
<dbReference type="PRINTS" id="PR01498">
    <property type="entry name" value="SHAWCHANNEL"/>
</dbReference>
<dbReference type="SMART" id="SM00225">
    <property type="entry name" value="BTB"/>
    <property type="match status" value="1"/>
</dbReference>
<dbReference type="SUPFAM" id="SSF54695">
    <property type="entry name" value="POZ domain"/>
    <property type="match status" value="1"/>
</dbReference>
<dbReference type="SUPFAM" id="SSF81324">
    <property type="entry name" value="Voltage-gated potassium channels"/>
    <property type="match status" value="1"/>
</dbReference>
<evidence type="ECO:0000250" key="1"/>
<evidence type="ECO:0000250" key="2">
    <source>
        <dbReference type="UniProtKB" id="P25122"/>
    </source>
</evidence>
<evidence type="ECO:0000250" key="3">
    <source>
        <dbReference type="UniProtKB" id="P48547"/>
    </source>
</evidence>
<evidence type="ECO:0000255" key="4"/>
<evidence type="ECO:0000256" key="5">
    <source>
        <dbReference type="SAM" id="MobiDB-lite"/>
    </source>
</evidence>
<evidence type="ECO:0000269" key="6">
    <source>
    </source>
</evidence>
<evidence type="ECO:0000269" key="7">
    <source>
    </source>
</evidence>
<evidence type="ECO:0000269" key="8">
    <source>
    </source>
</evidence>
<evidence type="ECO:0000269" key="9">
    <source>
    </source>
</evidence>
<evidence type="ECO:0000269" key="10">
    <source>
    </source>
</evidence>
<evidence type="ECO:0000269" key="11">
    <source>
    </source>
</evidence>
<evidence type="ECO:0000303" key="12">
    <source>
    </source>
</evidence>
<evidence type="ECO:0000305" key="13"/>
<evidence type="ECO:0000305" key="14">
    <source>
    </source>
</evidence>
<evidence type="ECO:0000312" key="15">
    <source>
        <dbReference type="MGI" id="MGI:96667"/>
    </source>
</evidence>
<evidence type="ECO:0007744" key="16">
    <source>
    </source>
</evidence>
<comment type="function">
    <text evidence="2 7 10">Voltage-gated potassium channel that opens in response to the voltage difference across the membrane and through which potassium ions pass in accordance with their electrochemical gradient (PubMed:1400413, PubMed:2599109). The mechanism is time-dependent and inactivation is slow (PubMed:2599109). Plays an important role in the rapid repolarization of fast-firing brain neurons. Can form functional homotetrameric channels and heterotetrameric channels that contain variable proportions of KCNC2, and possibly other family members as well. Contributes to fire sustained trains of very brief action potentials at high frequency in pallidal neurons (By similarity).</text>
</comment>
<comment type="catalytic activity">
    <reaction evidence="7 10">
        <text>K(+)(in) = K(+)(out)</text>
        <dbReference type="Rhea" id="RHEA:29463"/>
        <dbReference type="ChEBI" id="CHEBI:29103"/>
    </reaction>
</comment>
<comment type="subunit">
    <text evidence="1 3">Homotetramer. Homomultimer (By similarity). Heteromultimer with KCNG3, KCNG4 and KCNV2 (By similarity). Heteromultimer with KCNC2 (By similarity). Heterotetramer with KCNC3 (By similarity). Interacts with the ancillary subunits KCNE1 and KCNE2; the interaction modulates channel activity (By similarity).</text>
</comment>
<comment type="subcellular location">
    <subcellularLocation>
        <location evidence="7 10">Cell membrane</location>
        <topology evidence="4">Multi-pass membrane protein</topology>
    </subcellularLocation>
    <subcellularLocation>
        <location evidence="2">Cell projection</location>
        <location evidence="2">Axon</location>
    </subcellularLocation>
    <subcellularLocation>
        <location evidence="2">Presynaptic cell membrane</location>
    </subcellularLocation>
    <text evidence="2">Localizes in parallel fiber membranes, distributed on the perisynaptic and extrasynaptic membranes away from the active zones.</text>
</comment>
<comment type="alternative products">
    <event type="alternative splicing"/>
    <isoform>
        <id>P15388-1</id>
        <name>1</name>
        <name>KV3.1</name>
        <sequence type="displayed"/>
    </isoform>
    <isoform>
        <id>P15388-3</id>
        <name>2</name>
        <sequence type="described" ref="VSP_058604"/>
    </isoform>
</comment>
<comment type="tissue specificity">
    <text evidence="6 8 11">Detected in cerebellum (PubMed:11517255, PubMed:15217387). Detected in brain (at protein level) (PubMed:9037088). Detected in brain (PubMed:9037088).</text>
</comment>
<comment type="domain">
    <text evidence="13">The segment S4 is probably the voltage-sensor and is characterized by a series of positively charged amino acids at every third position.</text>
</comment>
<comment type="domain">
    <text evidence="3">The N-terminal cytoplasmic T1 domain is involved but not required for Zn(2+)-mediated tetramerization.</text>
</comment>
<comment type="PTM">
    <text evidence="2">N-glycosylated; contains sialylated glycans.</text>
</comment>
<comment type="disruption phenotype">
    <text evidence="6 8 9">Mutant mice are born at the expected Mendelian rate. They are viable and fertile, but have lower body weight than wild-type. They have normal spontaneous locomotor activity, but impaired motor skills (PubMed:9037088). Mice lacking both Kcnc3 and Kcnc1 are born at the expected Mendelian rate, but the pups do not thrive and all die about 26 days after birth when kept together with other littermates. Their failure to thrive may be due to motor problems; mutant pups survive when fed separately, but 45 days after birth their body weight is only 50 to 60 % of that of wild-type (PubMed:11517255). They appear uncoordinated and display severe ataxia, myoclonus and spontaneous whole-body muscle jerks, but display no obvious alterations in brain morphology (PubMed:11517255, PubMed:15217387, PubMed:16923152). Mutant mice are also much more sensitive to ethanol and fall sideways at ethanol concentrations that have no effect on wild-type mice (PubMed:11517255). They display increased locomotor and exploratory activity (PubMed:11517255, PubMed:15217387). Mice lacking Kcnc1 show reduced response to tremorogenic agent harmaline; mice lacking both Kcnc3 and Kcnc1 are resistant to the tremorogenic agent harmaline (PubMed:15217387).</text>
</comment>
<comment type="similarity">
    <text evidence="13">Belongs to the potassium channel family. C (Shaw) (TC 1.A.1.2) subfamily. Kv3.1/KCNC1 sub-subfamily.</text>
</comment>
<organism>
    <name type="scientific">Mus musculus</name>
    <name type="common">Mouse</name>
    <dbReference type="NCBI Taxonomy" id="10090"/>
    <lineage>
        <taxon>Eukaryota</taxon>
        <taxon>Metazoa</taxon>
        <taxon>Chordata</taxon>
        <taxon>Craniata</taxon>
        <taxon>Vertebrata</taxon>
        <taxon>Euteleostomi</taxon>
        <taxon>Mammalia</taxon>
        <taxon>Eutheria</taxon>
        <taxon>Euarchontoglires</taxon>
        <taxon>Glires</taxon>
        <taxon>Rodentia</taxon>
        <taxon>Myomorpha</taxon>
        <taxon>Muroidea</taxon>
        <taxon>Muridae</taxon>
        <taxon>Murinae</taxon>
        <taxon>Mus</taxon>
        <taxon>Mus</taxon>
    </lineage>
</organism>
<proteinExistence type="evidence at protein level"/>
<name>KCNC1_MOUSE</name>
<keyword id="KW-0025">Alternative splicing</keyword>
<keyword id="KW-1003">Cell membrane</keyword>
<keyword id="KW-0966">Cell projection</keyword>
<keyword id="KW-0325">Glycoprotein</keyword>
<keyword id="KW-0407">Ion channel</keyword>
<keyword id="KW-0406">Ion transport</keyword>
<keyword id="KW-0472">Membrane</keyword>
<keyword id="KW-0479">Metal-binding</keyword>
<keyword id="KW-0597">Phosphoprotein</keyword>
<keyword id="KW-0630">Potassium</keyword>
<keyword id="KW-0631">Potassium channel</keyword>
<keyword id="KW-0633">Potassium transport</keyword>
<keyword id="KW-1185">Reference proteome</keyword>
<keyword id="KW-0770">Synapse</keyword>
<keyword id="KW-0812">Transmembrane</keyword>
<keyword id="KW-1133">Transmembrane helix</keyword>
<keyword id="KW-0813">Transport</keyword>
<keyword id="KW-0851">Voltage-gated channel</keyword>
<keyword id="KW-0862">Zinc</keyword>
<accession>P15388</accession>
<accession>E9PVV3</accession>
<protein>
    <recommendedName>
        <fullName evidence="13">Voltage-gated potassium channel KCNC1</fullName>
    </recommendedName>
    <alternativeName>
        <fullName evidence="12">NGK2</fullName>
    </alternativeName>
    <alternativeName>
        <fullName>Potassium voltage-gated channel subfamily C member 1</fullName>
    </alternativeName>
    <alternativeName>
        <fullName evidence="14">Voltage-gated potassium channel subunit Kv3.1</fullName>
    </alternativeName>
    <alternativeName>
        <fullName>Voltage-gated potassium channel subunit Kv4</fullName>
    </alternativeName>
</protein>
<sequence length="511" mass="57928">MGQGDESERIVINVGGTRHQTYRSTLRTLPGTRLAWLAEPDAHSHFDYDPRADEFFFDRHPGVFAHILNYYRTGKLHCPADVCGPLYEEELAFWGIDETDVEPCCWMTYRQHRDAEEALDSFGGAPLDNSADDADADGPGDSGDGEDELEMTKRLALSDSPDGRPGGFWRRWQPRIWALFEDPYSSRYARYVAFASLFFILVSITTFCLETHERFNPIVNKTEIENVRNGTQVRYYREAETEAFLTYIEGVCVVWFTFEFLMRVVFCPNKVEFIKNSLNIIDFVAILPFYLEVGLSGLSSKAAKDVLGFLRVVRFVRILRIFKLTRHFVGLRVLGHTLRASTNEFLLLIIFLALGVLIFATMIYYAERIGAQPNDPSASEHTHFKNIPIGFWWAVVTMTTLGYGDMYPQTWSGMLVGALCALAGVLTIAMPVPVIVNNFGMYYSLAMAKQKLPKKKKKHIPRPPQLGSPNYCKSVVNSPHHSTQSDTCPLAQEEILEINRAGRKPLRGMSI</sequence>
<feature type="chain" id="PRO_0000054052" description="Voltage-gated potassium channel KCNC1">
    <location>
        <begin position="1"/>
        <end position="511"/>
    </location>
</feature>
<feature type="topological domain" description="Cytoplasmic" evidence="4">
    <location>
        <begin position="1"/>
        <end position="190"/>
    </location>
</feature>
<feature type="transmembrane region" description="Helical; Name=Segment S1" evidence="4">
    <location>
        <begin position="191"/>
        <end position="209"/>
    </location>
</feature>
<feature type="transmembrane region" description="Helical; Name=Segment S2" evidence="4">
    <location>
        <begin position="248"/>
        <end position="267"/>
    </location>
</feature>
<feature type="topological domain" description="Cytoplasmic" evidence="4">
    <location>
        <begin position="268"/>
        <end position="276"/>
    </location>
</feature>
<feature type="transmembrane region" description="Helical; Name=Segment S3" evidence="4">
    <location>
        <begin position="277"/>
        <end position="295"/>
    </location>
</feature>
<feature type="transmembrane region" description="Helical; Voltage-sensor; Name=Segment S4" evidence="4">
    <location>
        <begin position="309"/>
        <end position="331"/>
    </location>
</feature>
<feature type="topological domain" description="Cytoplasmic" evidence="4">
    <location>
        <begin position="332"/>
        <end position="344"/>
    </location>
</feature>
<feature type="transmembrane region" description="Helical; Name=Segment S5" evidence="4">
    <location>
        <begin position="345"/>
        <end position="366"/>
    </location>
</feature>
<feature type="transmembrane region" description="Helical; Name=Segment S6" evidence="4">
    <location>
        <begin position="415"/>
        <end position="436"/>
    </location>
</feature>
<feature type="topological domain" description="Cytoplasmic" evidence="4">
    <location>
        <begin position="437"/>
        <end position="511"/>
    </location>
</feature>
<feature type="region of interest" description="Disordered" evidence="5">
    <location>
        <begin position="121"/>
        <end position="147"/>
    </location>
</feature>
<feature type="short sequence motif" description="Selectivity filter" evidence="1">
    <location>
        <begin position="400"/>
        <end position="405"/>
    </location>
</feature>
<feature type="compositionally biased region" description="Acidic residues" evidence="5">
    <location>
        <begin position="130"/>
        <end position="147"/>
    </location>
</feature>
<feature type="binding site" evidence="3">
    <location>
        <position position="77"/>
    </location>
    <ligand>
        <name>Zn(2+)</name>
        <dbReference type="ChEBI" id="CHEBI:29105"/>
    </ligand>
</feature>
<feature type="binding site" evidence="3">
    <location>
        <position position="83"/>
    </location>
    <ligand>
        <name>Zn(2+)</name>
        <dbReference type="ChEBI" id="CHEBI:29105"/>
    </ligand>
</feature>
<feature type="binding site" evidence="3">
    <location>
        <position position="104"/>
    </location>
    <ligand>
        <name>Zn(2+)</name>
        <dbReference type="ChEBI" id="CHEBI:29105"/>
    </ligand>
</feature>
<feature type="binding site" evidence="3">
    <location>
        <position position="105"/>
    </location>
    <ligand>
        <name>Zn(2+)</name>
        <dbReference type="ChEBI" id="CHEBI:29105"/>
    </ligand>
</feature>
<feature type="binding site" evidence="3">
    <location>
        <position position="400"/>
    </location>
    <ligand>
        <name>K(+)</name>
        <dbReference type="ChEBI" id="CHEBI:29103"/>
        <note>ligand shared between homotetrameric partners</note>
    </ligand>
</feature>
<feature type="binding site" evidence="3">
    <location>
        <position position="401"/>
    </location>
    <ligand>
        <name>K(+)</name>
        <dbReference type="ChEBI" id="CHEBI:29103"/>
        <note>ligand shared between homotetrameric partners</note>
    </ligand>
</feature>
<feature type="binding site" evidence="3">
    <location>
        <position position="402"/>
    </location>
    <ligand>
        <name>K(+)</name>
        <dbReference type="ChEBI" id="CHEBI:29103"/>
        <note>ligand shared between homotetrameric partners</note>
    </ligand>
</feature>
<feature type="binding site" evidence="3">
    <location>
        <position position="403"/>
    </location>
    <ligand>
        <name>K(+)</name>
        <dbReference type="ChEBI" id="CHEBI:29103"/>
        <note>ligand shared between homotetrameric partners</note>
    </ligand>
</feature>
<feature type="modified residue" description="Phosphoserine" evidence="2">
    <location>
        <position position="44"/>
    </location>
</feature>
<feature type="modified residue" description="Phosphoserine" evidence="2">
    <location>
        <position position="130"/>
    </location>
</feature>
<feature type="modified residue" description="Phosphoserine" evidence="2">
    <location>
        <position position="142"/>
    </location>
</feature>
<feature type="modified residue" description="Phosphoserine" evidence="2">
    <location>
        <position position="158"/>
    </location>
</feature>
<feature type="modified residue" description="Phosphoserine" evidence="16">
    <location>
        <position position="160"/>
    </location>
</feature>
<feature type="modified residue" description="Phosphoserine" evidence="16">
    <location>
        <position position="474"/>
    </location>
</feature>
<feature type="modified residue" description="Phosphothreonine" evidence="16">
    <location>
        <position position="483"/>
    </location>
</feature>
<feature type="glycosylation site" description="N-linked (GlcNAc...) asparagine" evidence="4">
    <location>
        <position position="220"/>
    </location>
</feature>
<feature type="glycosylation site" description="N-linked (GlcNAc...) asparagine" evidence="4">
    <location>
        <position position="229"/>
    </location>
</feature>
<feature type="splice variant" id="VSP_058604" description="In isoform 2.">
    <original>GRKPLRGMSI</original>
    <variation>DSKLNGEVAKAALANEDCPHIDQALTPDEGLPFTRSGTRERYGPCFLLSTGEYACPPGGGMRKDLCKESPVIAKYMPTEAVRVT</variation>
    <location>
        <begin position="502"/>
        <end position="511"/>
    </location>
</feature>
<gene>
    <name evidence="15" type="primary">Kcnc1</name>
</gene>
<reference key="1">
    <citation type="journal article" date="1989" name="FEBS Lett.">
        <title>Potassium channels from NG108-15 neuroblastoma-glioma hybrid cells. Primary structure and functional expression from cDNAs.</title>
        <authorList>
            <person name="Yokoyama S."/>
            <person name="Imoto K."/>
            <person name="Kawamura T."/>
            <person name="Higashida H."/>
            <person name="Iwabe N."/>
            <person name="Miyata T."/>
            <person name="Numa S."/>
        </authorList>
    </citation>
    <scope>NUCLEOTIDE SEQUENCE [MRNA] (ISOFORM 1)</scope>
    <scope>FUNCTION</scope>
    <scope>TRANSPORTER ACTIVITY</scope>
    <scope>SUBCELLULAR LOCATION</scope>
</reference>
<reference key="2">
    <citation type="journal article" date="2009" name="PLoS Biol.">
        <title>Lineage-specific biology revealed by a finished genome assembly of the mouse.</title>
        <authorList>
            <person name="Church D.M."/>
            <person name="Goodstadt L."/>
            <person name="Hillier L.W."/>
            <person name="Zody M.C."/>
            <person name="Goldstein S."/>
            <person name="She X."/>
            <person name="Bult C.J."/>
            <person name="Agarwala R."/>
            <person name="Cherry J.L."/>
            <person name="DiCuccio M."/>
            <person name="Hlavina W."/>
            <person name="Kapustin Y."/>
            <person name="Meric P."/>
            <person name="Maglott D."/>
            <person name="Birtle Z."/>
            <person name="Marques A.C."/>
            <person name="Graves T."/>
            <person name="Zhou S."/>
            <person name="Teague B."/>
            <person name="Potamousis K."/>
            <person name="Churas C."/>
            <person name="Place M."/>
            <person name="Herschleb J."/>
            <person name="Runnheim R."/>
            <person name="Forrest D."/>
            <person name="Amos-Landgraf J."/>
            <person name="Schwartz D.C."/>
            <person name="Cheng Z."/>
            <person name="Lindblad-Toh K."/>
            <person name="Eichler E.E."/>
            <person name="Ponting C.P."/>
        </authorList>
    </citation>
    <scope>NUCLEOTIDE SEQUENCE [LARGE SCALE GENOMIC DNA]</scope>
    <source>
        <strain>C57BL/6J</strain>
    </source>
</reference>
<reference key="3">
    <citation type="journal article" date="1992" name="J. Biol. Chem.">
        <title>The Shaw-related potassium channel gene, Kv3.1, on human chromosome 11, encodes the type l K+ channel in T cells.</title>
        <authorList>
            <person name="Grissmer S."/>
            <person name="Ghanshani S."/>
            <person name="Dethlefs B."/>
            <person name="McPherson J.D."/>
            <person name="Wasmuth J.J."/>
            <person name="Gutman G.A."/>
            <person name="Cahalan M.D."/>
            <person name="Chandy K.G."/>
        </authorList>
    </citation>
    <scope>FUNCTION</scope>
    <scope>TRANSPORTER ACTIVITY</scope>
    <scope>SUBCELLULAR LOCATION</scope>
</reference>
<reference key="4">
    <citation type="journal article" date="1997" name="Proc. Natl. Acad. Sci. U.S.A.">
        <title>Pleiotropic effects of a disrupted K+ channel gene: reduced body weight, impaired motor skill and muscle contraction, but no seizures.</title>
        <authorList>
            <person name="Ho C.S."/>
            <person name="Grange R.W."/>
            <person name="Joho R.H."/>
        </authorList>
    </citation>
    <scope>DISRUPTION PHENOTYPE</scope>
    <scope>TISSUE SPECIFICITY</scope>
</reference>
<reference key="5">
    <citation type="journal article" date="2001" name="J. Neurosci.">
        <title>Alcohol hypersensitivity, increased locomotion, and spontaneous myoclonus in mice lacking the potassium channels Kv3.1 and Kv3.3.</title>
        <authorList>
            <person name="Espinosa F."/>
            <person name="McMahon A."/>
            <person name="Chan E."/>
            <person name="Wang S."/>
            <person name="Ho C.S."/>
            <person name="Heintz N."/>
            <person name="Joho R.H."/>
        </authorList>
    </citation>
    <scope>DISRUPTION PHENOTYPE</scope>
    <scope>TISSUE SPECIFICITY</scope>
</reference>
<reference key="6">
    <citation type="journal article" date="2004" name="Eur. J. Neurosci.">
        <title>Allele-dependent changes of olivocerebellar circuit properties in the absence of the voltage-gated potassium channels Kv3.1 and Kv3.3.</title>
        <authorList>
            <person name="McMahon A."/>
            <person name="Fowler S.C."/>
            <person name="Perney T.M."/>
            <person name="Akemann W."/>
            <person name="Knoepfel T."/>
            <person name="Joho R.H."/>
        </authorList>
    </citation>
    <scope>DISRUPTION PHENOTYPE</scope>
    <scope>TISSUE SPECIFICITY</scope>
</reference>
<reference key="7">
    <citation type="journal article" date="2006" name="Genes Brain Behav.">
        <title>Behavioral motor dysfunction in Kv3-type potassium channel-deficient mice.</title>
        <authorList>
            <person name="Joho R.H."/>
            <person name="Street C."/>
            <person name="Matsushita S."/>
            <person name="Knoepfel T."/>
        </authorList>
    </citation>
    <scope>DISRUPTION PHENOTYPE</scope>
</reference>
<reference key="8">
    <citation type="journal article" date="2010" name="Cell">
        <title>A tissue-specific atlas of mouse protein phosphorylation and expression.</title>
        <authorList>
            <person name="Huttlin E.L."/>
            <person name="Jedrychowski M.P."/>
            <person name="Elias J.E."/>
            <person name="Goswami T."/>
            <person name="Rad R."/>
            <person name="Beausoleil S.A."/>
            <person name="Villen J."/>
            <person name="Haas W."/>
            <person name="Sowa M.E."/>
            <person name="Gygi S.P."/>
        </authorList>
    </citation>
    <scope>PHOSPHORYLATION [LARGE SCALE ANALYSIS] AT SER-160; SER-474 AND THR-483</scope>
    <scope>IDENTIFICATION BY MASS SPECTROMETRY [LARGE SCALE ANALYSIS]</scope>
    <source>
        <tissue>Brain</tissue>
    </source>
</reference>